<accession>G5EEM0</accession>
<accession>A0A168HAV7</accession>
<accession>Q86PI7</accession>
<sequence>MTPQSSPSSSRDHVCLVCQDFASGYHYGVPSCVGCKTFFRRTIMKKQKYICQFEGNCPVDKTIRCACRYCRFEKCLSVGMDRNALQQNRDPIGYTKRTRRPKKELKTTSDCSSDEGASTPPSVSPLQLSPPPISPLLFQAAPLKPRRCILQTLAEREKCANDLRLSEYLPIRSLHEALCSKALLNDTAFLEKWGQPSERHQIFDLRFVNHDDYHYWHERDWFLLTEYAKTFDVFEALDYQDKAELVRHAAITVPVLVQVWNSPDYGPDTIVFPDGAYFDRTPEPTRPAGLNRKKYQMLDLVLKPFRDLQLDATEFAAFKAVTFLNPDADISLPARKLVNNERVRITKQLYGYMAMKDDVDTAIERFARLVLMGTSMSKMACESKEAVWIADFFENIGFSAFARQLFFGDTTSVVAHKL</sequence>
<gene>
    <name evidence="12" type="primary">nhr-114</name>
    <name evidence="12" type="ORF">Y45G5AM.1</name>
</gene>
<comment type="function">
    <text evidence="6 7">Probable transcription factor which may have a role in detoxifying dietary metabolites arising from bacterial tryptophan metabolism (PubMed:23499532). Required for fertility and involved in proper postembryonic germline development, especially germline stem cell (GSC) proliferation (PubMed:23499532). Required for activation of the methionine/S-adenosylmethionine (Met/SAM) cycle in response to low levels of SAM (PubMed:33016879).</text>
</comment>
<comment type="interaction">
    <interactant intactId="EBI-315855">
        <id>G5EEM0</id>
    </interactant>
    <interactant intactId="EBI-6094254">
        <id>Q9XTB2</id>
        <label>gpa-13</label>
    </interactant>
    <organismsDiffer>false</organismsDiffer>
    <experiments>3</experiments>
</comment>
<comment type="subcellular location">
    <subcellularLocation>
        <location evidence="3 5 6">Nucleus</location>
    </subcellularLocation>
</comment>
<comment type="alternative products">
    <event type="alternative splicing"/>
    <isoform>
        <id>G5EEM0-1</id>
        <name evidence="12">a</name>
        <sequence type="displayed"/>
    </isoform>
    <isoform>
        <id>G5EEM0-2</id>
        <name evidence="13">d</name>
        <sequence type="described" ref="VSP_060919"/>
    </isoform>
</comment>
<comment type="tissue specificity">
    <text evidence="5 6">Expressed in germ and intestinal cells and at low levels in the hypodermis.</text>
</comment>
<comment type="developmental stage">
    <text evidence="6">First expressed in the embryo and subsequently in larvae and adults.</text>
</comment>
<comment type="disruption phenotype">
    <text evidence="6 7">No obvious somatic morphological defects in adults (PubMed:23499532). However, shows diet-sensitive sterility arising from germ-cell proliferation defects (PubMed:23499532). Sterile when fed the standard bacterial strain, E.coli B (OP50) as food source, and fertile when maintained on E.coli K-12 strains or bacterial soil isolates (PubMed:23499532). Dietary supplementation of L-tryptophan, but not the D isomer, to E.coli B strains suppresses sterility; this effect requires live bacteria (PubMed:23499532). Sterility when fed E.coli B strain OP50 can be rescued by dietary supplementation of either vitamin B12, methionine or choline (PubMed:33016879). RNAi-mediated knockdown targeted to the intestine, but not the germline, restored almost normal fertility on an E.coli OP50 diet (PubMed:23499532). RNAi-mediated knockdown on a rrf-1 mutant background, in which knockdown occurs mainly in the germline but occurs only weakly in somatic tissues, allowed recovery of a majority (64%) of fertile animals (PubMed:23499532). RNAi-mediated knockdown on an nhr-10 mutant background suppresses expression of acdh-1 (PubMed:33016879).</text>
</comment>
<comment type="similarity">
    <text evidence="3">Belongs to the nuclear hormone receptor family.</text>
</comment>
<comment type="caution">
    <text evidence="6 7">It has been reported that mutant phenotypes can be rescued by tryptophan dietary supplementation, but not by methionine (PubMed:23499532). However, a later report describes successful phenotype rescue by methionine supplementation; this may be due to methodological differences (PubMed:33016879).</text>
</comment>
<evidence type="ECO:0000255" key="1">
    <source>
        <dbReference type="PROSITE-ProRule" id="PRU00407"/>
    </source>
</evidence>
<evidence type="ECO:0000255" key="2">
    <source>
        <dbReference type="PROSITE-ProRule" id="PRU01189"/>
    </source>
</evidence>
<evidence type="ECO:0000255" key="3">
    <source>
        <dbReference type="RuleBase" id="RU004334"/>
    </source>
</evidence>
<evidence type="ECO:0000256" key="4">
    <source>
        <dbReference type="SAM" id="MobiDB-lite"/>
    </source>
</evidence>
<evidence type="ECO:0000269" key="5">
    <source>
    </source>
</evidence>
<evidence type="ECO:0000269" key="6">
    <source>
    </source>
</evidence>
<evidence type="ECO:0000269" key="7">
    <source>
    </source>
</evidence>
<evidence type="ECO:0000305" key="8"/>
<evidence type="ECO:0000312" key="9">
    <source>
        <dbReference type="EMBL" id="AAO27833.1"/>
    </source>
</evidence>
<evidence type="ECO:0000312" key="10">
    <source>
        <dbReference type="EMBL" id="AAO39202.1"/>
    </source>
</evidence>
<evidence type="ECO:0000312" key="11">
    <source>
        <dbReference type="Proteomes" id="UP000001940"/>
    </source>
</evidence>
<evidence type="ECO:0000312" key="12">
    <source>
        <dbReference type="WormBase" id="Y45G5AM.1a"/>
    </source>
</evidence>
<evidence type="ECO:0000312" key="13">
    <source>
        <dbReference type="WormBase" id="Y45G5AM.1d"/>
    </source>
</evidence>
<proteinExistence type="evidence at protein level"/>
<reference evidence="9" key="1">
    <citation type="journal article" date="2003" name="Comp. Funct. Genomics">
        <title>Proteins interacting with Caenorhabditis elegans Galpha subunits.</title>
        <authorList>
            <person name="Cuppen E."/>
            <person name="van der Linden A.M."/>
            <person name="Jansen G."/>
            <person name="Plasterk R.H."/>
        </authorList>
    </citation>
    <scope>NUCLEOTIDE SEQUENCE [MRNA]</scope>
    <scope>SUBCELLULAR LOCATION</scope>
    <scope>TISSUE SPECIFICITY</scope>
</reference>
<reference evidence="10" key="2">
    <citation type="journal article" date="2005" name="J. Mol. Evol.">
        <title>Explosive lineage-specific expansion of the orphan nuclear receptor HNF4 in nematodes.</title>
        <authorList>
            <person name="Robinson-Rechavi M."/>
            <person name="Maina C.V."/>
            <person name="Gissendanner C.R."/>
            <person name="Laudet V."/>
            <person name="Sluder A."/>
        </authorList>
    </citation>
    <scope>NUCLEOTIDE SEQUENCE [MRNA]</scope>
</reference>
<reference evidence="11" key="3">
    <citation type="journal article" date="1998" name="Science">
        <title>Genome sequence of the nematode C. elegans: a platform for investigating biology.</title>
        <authorList>
            <consortium name="The C. elegans sequencing consortium"/>
        </authorList>
    </citation>
    <scope>NUCLEOTIDE SEQUENCE [LARGE SCALE GENOMIC DNA]</scope>
    <source>
        <strain evidence="11">Bristol N2</strain>
    </source>
</reference>
<reference evidence="8" key="4">
    <citation type="journal article" date="2013" name="Curr. Biol.">
        <title>Fertility and germline stem cell maintenance under different diets requires nhr-114/HNF4 in C. elegans.</title>
        <authorList>
            <person name="Gracida X."/>
            <person name="Eckmann C.R."/>
        </authorList>
    </citation>
    <scope>FUNCTION</scope>
    <scope>TISSUE SPECIFICITY</scope>
    <scope>DEVELOPMENTAL STAGE</scope>
    <scope>DISRUPTION PHENOTYPE</scope>
</reference>
<reference evidence="8" key="5">
    <citation type="journal article" date="2020" name="Elife">
        <title>C. elegans methionine/S-adenosylmethionine cycle activity is sensed and adjusted by a nuclear hormone receptor.</title>
        <authorList>
            <person name="Giese G.E."/>
            <person name="Walker M.D."/>
            <person name="Ponomarova O."/>
            <person name="Zhang H."/>
            <person name="Li X."/>
            <person name="Minevich G."/>
            <person name="Walhout A.J."/>
        </authorList>
    </citation>
    <scope>FUNCTION</scope>
    <scope>DISRUPTION PHENOTYPE</scope>
</reference>
<organism evidence="11">
    <name type="scientific">Caenorhabditis elegans</name>
    <dbReference type="NCBI Taxonomy" id="6239"/>
    <lineage>
        <taxon>Eukaryota</taxon>
        <taxon>Metazoa</taxon>
        <taxon>Ecdysozoa</taxon>
        <taxon>Nematoda</taxon>
        <taxon>Chromadorea</taxon>
        <taxon>Rhabditida</taxon>
        <taxon>Rhabditina</taxon>
        <taxon>Rhabditomorpha</taxon>
        <taxon>Rhabditoidea</taxon>
        <taxon>Rhabditidae</taxon>
        <taxon>Peloderinae</taxon>
        <taxon>Caenorhabditis</taxon>
    </lineage>
</organism>
<dbReference type="EMBL" id="AF408754">
    <property type="protein sequence ID" value="AAO27833.1"/>
    <property type="molecule type" value="mRNA"/>
</dbReference>
<dbReference type="EMBL" id="AY204201">
    <property type="protein sequence ID" value="AAO39202.1"/>
    <property type="molecule type" value="mRNA"/>
</dbReference>
<dbReference type="EMBL" id="BX284605">
    <property type="protein sequence ID" value="CCD74319.1"/>
    <property type="molecule type" value="Genomic_DNA"/>
</dbReference>
<dbReference type="EMBL" id="BX284605">
    <property type="protein sequence ID" value="SAP35607.1"/>
    <property type="molecule type" value="Genomic_DNA"/>
</dbReference>
<dbReference type="RefSeq" id="NP_001024242.1">
    <molecule id="G5EEM0-1"/>
    <property type="nucleotide sequence ID" value="NM_001029071.5"/>
</dbReference>
<dbReference type="RefSeq" id="NP_001317845.1">
    <molecule id="G5EEM0-2"/>
    <property type="nucleotide sequence ID" value="NM_001330839.3"/>
</dbReference>
<dbReference type="SMR" id="G5EEM0"/>
<dbReference type="FunCoup" id="G5EEM0">
    <property type="interactions" value="101"/>
</dbReference>
<dbReference type="IntAct" id="G5EEM0">
    <property type="interactions" value="78"/>
</dbReference>
<dbReference type="STRING" id="6239.Y45G5AM.1a.2"/>
<dbReference type="PaxDb" id="6239-Y45G5AM.1a.2"/>
<dbReference type="EnsemblMetazoa" id="Y45G5AM.1a.1">
    <molecule id="G5EEM0-1"/>
    <property type="protein sequence ID" value="Y45G5AM.1a.1"/>
    <property type="gene ID" value="WBGene00003704"/>
</dbReference>
<dbReference type="EnsemblMetazoa" id="Y45G5AM.1d.1">
    <molecule id="G5EEM0-2"/>
    <property type="protein sequence ID" value="Y45G5AM.1d.1"/>
    <property type="gene ID" value="WBGene00003704"/>
</dbReference>
<dbReference type="GeneID" id="178821"/>
<dbReference type="KEGG" id="cel:CELE_Y45G5AM.1"/>
<dbReference type="AGR" id="WB:WBGene00003704"/>
<dbReference type="CTD" id="178821"/>
<dbReference type="WormBase" id="Y45G5AM.1a">
    <molecule id="G5EEM0-1"/>
    <property type="protein sequence ID" value="CE33735"/>
    <property type="gene ID" value="WBGene00003704"/>
    <property type="gene designation" value="nhr-114"/>
</dbReference>
<dbReference type="WormBase" id="Y45G5AM.1d">
    <molecule id="G5EEM0-2"/>
    <property type="protein sequence ID" value="CE51628"/>
    <property type="gene ID" value="WBGene00003704"/>
    <property type="gene designation" value="nhr-114"/>
</dbReference>
<dbReference type="eggNOG" id="KOG3575">
    <property type="taxonomic scope" value="Eukaryota"/>
</dbReference>
<dbReference type="GeneTree" id="ENSGT00970000196356"/>
<dbReference type="InParanoid" id="G5EEM0"/>
<dbReference type="OMA" id="SRDHVCL"/>
<dbReference type="OrthoDB" id="5799427at2759"/>
<dbReference type="PhylomeDB" id="G5EEM0"/>
<dbReference type="Reactome" id="R-CEL-383280">
    <property type="pathway name" value="Nuclear Receptor transcription pathway"/>
</dbReference>
<dbReference type="SignaLink" id="G5EEM0"/>
<dbReference type="PRO" id="PR:G5EEM0"/>
<dbReference type="Proteomes" id="UP000001940">
    <property type="component" value="Chromosome V"/>
</dbReference>
<dbReference type="Bgee" id="WBGene00003704">
    <property type="expression patterns" value="Expressed in larva and 7 other cell types or tissues"/>
</dbReference>
<dbReference type="ExpressionAtlas" id="G5EEM0">
    <property type="expression patterns" value="baseline and differential"/>
</dbReference>
<dbReference type="GO" id="GO:0005634">
    <property type="term" value="C:nucleus"/>
    <property type="evidence" value="ECO:0000314"/>
    <property type="project" value="UniProtKB"/>
</dbReference>
<dbReference type="GO" id="GO:0004879">
    <property type="term" value="F:nuclear receptor activity"/>
    <property type="evidence" value="ECO:0000318"/>
    <property type="project" value="GO_Central"/>
</dbReference>
<dbReference type="GO" id="GO:0000978">
    <property type="term" value="F:RNA polymerase II cis-regulatory region sequence-specific DNA binding"/>
    <property type="evidence" value="ECO:0000318"/>
    <property type="project" value="GO_Central"/>
</dbReference>
<dbReference type="GO" id="GO:0008270">
    <property type="term" value="F:zinc ion binding"/>
    <property type="evidence" value="ECO:0007669"/>
    <property type="project" value="UniProtKB-KW"/>
</dbReference>
<dbReference type="GO" id="GO:0030154">
    <property type="term" value="P:cell differentiation"/>
    <property type="evidence" value="ECO:0000318"/>
    <property type="project" value="GO_Central"/>
</dbReference>
<dbReference type="GO" id="GO:0010468">
    <property type="term" value="P:regulation of gene expression"/>
    <property type="evidence" value="ECO:0000315"/>
    <property type="project" value="UniProtKB"/>
</dbReference>
<dbReference type="GO" id="GO:0006357">
    <property type="term" value="P:regulation of transcription by RNA polymerase II"/>
    <property type="evidence" value="ECO:0000318"/>
    <property type="project" value="GO_Central"/>
</dbReference>
<dbReference type="GO" id="GO:0033353">
    <property type="term" value="P:S-adenosylmethionine cycle"/>
    <property type="evidence" value="ECO:0000315"/>
    <property type="project" value="UniProtKB"/>
</dbReference>
<dbReference type="CDD" id="cd06960">
    <property type="entry name" value="NR_DBD_HNF4A"/>
    <property type="match status" value="1"/>
</dbReference>
<dbReference type="FunFam" id="3.30.50.10:FF:000030">
    <property type="entry name" value="Nuclear Hormone Receptor family"/>
    <property type="match status" value="1"/>
</dbReference>
<dbReference type="Gene3D" id="3.30.50.10">
    <property type="entry name" value="Erythroid Transcription Factor GATA-1, subunit A"/>
    <property type="match status" value="1"/>
</dbReference>
<dbReference type="Gene3D" id="1.10.565.10">
    <property type="entry name" value="Retinoid X Receptor"/>
    <property type="match status" value="1"/>
</dbReference>
<dbReference type="InterPro" id="IPR049636">
    <property type="entry name" value="HNF4-like_DBD"/>
</dbReference>
<dbReference type="InterPro" id="IPR035500">
    <property type="entry name" value="NHR-like_dom_sf"/>
</dbReference>
<dbReference type="InterPro" id="IPR000536">
    <property type="entry name" value="Nucl_hrmn_rcpt_lig-bd"/>
</dbReference>
<dbReference type="InterPro" id="IPR050274">
    <property type="entry name" value="Nuclear_hormone_rcpt_NR2"/>
</dbReference>
<dbReference type="InterPro" id="IPR001723">
    <property type="entry name" value="Nuclear_hrmn_rcpt"/>
</dbReference>
<dbReference type="InterPro" id="IPR001628">
    <property type="entry name" value="Znf_hrmn_rcpt"/>
</dbReference>
<dbReference type="InterPro" id="IPR013088">
    <property type="entry name" value="Znf_NHR/GATA"/>
</dbReference>
<dbReference type="PANTHER" id="PTHR24083">
    <property type="entry name" value="NUCLEAR HORMONE RECEPTOR"/>
    <property type="match status" value="1"/>
</dbReference>
<dbReference type="Pfam" id="PF00104">
    <property type="entry name" value="Hormone_recep"/>
    <property type="match status" value="1"/>
</dbReference>
<dbReference type="Pfam" id="PF00105">
    <property type="entry name" value="zf-C4"/>
    <property type="match status" value="1"/>
</dbReference>
<dbReference type="PRINTS" id="PR00398">
    <property type="entry name" value="STRDHORMONER"/>
</dbReference>
<dbReference type="PRINTS" id="PR00047">
    <property type="entry name" value="STROIDFINGER"/>
</dbReference>
<dbReference type="SMART" id="SM00430">
    <property type="entry name" value="HOLI"/>
    <property type="match status" value="1"/>
</dbReference>
<dbReference type="SMART" id="SM00399">
    <property type="entry name" value="ZnF_C4"/>
    <property type="match status" value="1"/>
</dbReference>
<dbReference type="SUPFAM" id="SSF57716">
    <property type="entry name" value="Glucocorticoid receptor-like (DNA-binding domain)"/>
    <property type="match status" value="1"/>
</dbReference>
<dbReference type="SUPFAM" id="SSF48508">
    <property type="entry name" value="Nuclear receptor ligand-binding domain"/>
    <property type="match status" value="1"/>
</dbReference>
<dbReference type="PROSITE" id="PS51843">
    <property type="entry name" value="NR_LBD"/>
    <property type="match status" value="1"/>
</dbReference>
<dbReference type="PROSITE" id="PS00031">
    <property type="entry name" value="NUCLEAR_REC_DBD_1"/>
    <property type="match status" value="1"/>
</dbReference>
<dbReference type="PROSITE" id="PS51030">
    <property type="entry name" value="NUCLEAR_REC_DBD_2"/>
    <property type="match status" value="1"/>
</dbReference>
<feature type="chain" id="PRO_0000452183" description="Nuclear hormone receptor 114">
    <location>
        <begin position="1"/>
        <end position="418"/>
    </location>
</feature>
<feature type="domain" description="NR LBD" evidence="2">
    <location>
        <begin position="170"/>
        <end position="409"/>
    </location>
</feature>
<feature type="DNA-binding region" description="Nuclear receptor" evidence="1">
    <location>
        <begin position="12"/>
        <end position="87"/>
    </location>
</feature>
<feature type="zinc finger region" description="NR C4-type" evidence="1">
    <location>
        <begin position="15"/>
        <end position="35"/>
    </location>
</feature>
<feature type="zinc finger region" description="NR C4-type" evidence="1">
    <location>
        <begin position="51"/>
        <end position="70"/>
    </location>
</feature>
<feature type="region of interest" description="Disordered" evidence="4">
    <location>
        <begin position="89"/>
        <end position="130"/>
    </location>
</feature>
<feature type="region of interest" description="AF-2" evidence="2">
    <location>
        <begin position="398"/>
        <end position="409"/>
    </location>
</feature>
<feature type="splice variant" id="VSP_060919" description="In isoform d.">
    <original>MTPQSSPSSSRDHVCLVCQDFASGYHYGVPSCVGCKTFFRRTIMKKQKYICQFEGNCPVDKTIRCACRYCRFEKCLSVGMDRNALQQNRDPIGYTKRTRRPKKELKTTSDCSSDEGASTPPSVSPLQLSPPPISPLLFQAAPLKPRRCILQTLAEREKCANDLRLSEYLPIRSLHEALCSKALLNDTAFLEKWGQPSERHQIFDLRFVNHDDYHYWHERDWFLLTEYAKTFDVFEALDYQDKAELVRHAAITVPVLVQVWNSPDYGPDTIVFPDGAYFDRTPEPTR</original>
    <variation>MVPTSIVLQSQ</variation>
    <location>
        <begin position="1"/>
        <end position="286"/>
    </location>
</feature>
<feature type="sequence conflict" description="In Ref. 2; AAO39202." evidence="8" ref="2">
    <location>
        <begin position="1"/>
        <end position="9"/>
    </location>
</feature>
<feature type="sequence conflict" description="In Ref. 2; AAO39202." evidence="8" ref="2">
    <original>Q</original>
    <variation>R</variation>
    <location>
        <position position="309"/>
    </location>
</feature>
<name>NH114_CAEEL</name>
<protein>
    <recommendedName>
        <fullName evidence="12">Nuclear hormone receptor 114</fullName>
    </recommendedName>
</protein>
<keyword id="KW-0025">Alternative splicing</keyword>
<keyword id="KW-0238">DNA-binding</keyword>
<keyword id="KW-0479">Metal-binding</keyword>
<keyword id="KW-0539">Nucleus</keyword>
<keyword id="KW-0675">Receptor</keyword>
<keyword id="KW-1185">Reference proteome</keyword>
<keyword id="KW-0804">Transcription</keyword>
<keyword id="KW-0805">Transcription regulation</keyword>
<keyword id="KW-0862">Zinc</keyword>
<keyword id="KW-0863">Zinc-finger</keyword>